<feature type="chain" id="PRO_0000171808" description="Putative membrane protein insertion efficiency factor">
    <location>
        <begin position="1"/>
        <end position="103"/>
    </location>
</feature>
<proteinExistence type="inferred from homology"/>
<gene>
    <name type="ordered locus">CCA_00149</name>
</gene>
<organism>
    <name type="scientific">Chlamydia caviae (strain ATCC VR-813 / DSM 19441 / 03DC25 / GPIC)</name>
    <name type="common">Chlamydophila caviae</name>
    <dbReference type="NCBI Taxonomy" id="227941"/>
    <lineage>
        <taxon>Bacteria</taxon>
        <taxon>Pseudomonadati</taxon>
        <taxon>Chlamydiota</taxon>
        <taxon>Chlamydiia</taxon>
        <taxon>Chlamydiales</taxon>
        <taxon>Chlamydiaceae</taxon>
        <taxon>Chlamydia/Chlamydophila group</taxon>
        <taxon>Chlamydia</taxon>
    </lineage>
</organism>
<evidence type="ECO:0000255" key="1">
    <source>
        <dbReference type="HAMAP-Rule" id="MF_00386"/>
    </source>
</evidence>
<sequence length="103" mass="11337">MSFKLFIKNLPTNLCCGLIHIYRWTISPLLGSPCRFFPTCSQYALQALKHHGCIKGLGLTIKRIGKCGPWHPGGVDLVPMTTLEEALDISPAVDDDESCDLHA</sequence>
<protein>
    <recommendedName>
        <fullName evidence="1">Putative membrane protein insertion efficiency factor</fullName>
    </recommendedName>
</protein>
<comment type="function">
    <text evidence="1">Could be involved in insertion of integral membrane proteins into the membrane.</text>
</comment>
<comment type="subcellular location">
    <subcellularLocation>
        <location evidence="1">Cell inner membrane</location>
        <topology evidence="1">Peripheral membrane protein</topology>
        <orientation evidence="1">Cytoplasmic side</orientation>
    </subcellularLocation>
</comment>
<comment type="similarity">
    <text evidence="1">Belongs to the UPF0161 family.</text>
</comment>
<accession>Q824J6</accession>
<name>YIDD_CHLCV</name>
<reference key="1">
    <citation type="journal article" date="2003" name="Nucleic Acids Res.">
        <title>Genome sequence of Chlamydophila caviae (Chlamydia psittaci GPIC): examining the role of niche-specific genes in the evolution of the Chlamydiaceae.</title>
        <authorList>
            <person name="Read T.D."/>
            <person name="Myers G.S.A."/>
            <person name="Brunham R.C."/>
            <person name="Nelson W.C."/>
            <person name="Paulsen I.T."/>
            <person name="Heidelberg J.F."/>
            <person name="Holtzapple E.K."/>
            <person name="Khouri H.M."/>
            <person name="Federova N.B."/>
            <person name="Carty H.A."/>
            <person name="Umayam L.A."/>
            <person name="Haft D.H."/>
            <person name="Peterson J.D."/>
            <person name="Beanan M.J."/>
            <person name="White O."/>
            <person name="Salzberg S.L."/>
            <person name="Hsia R.-C."/>
            <person name="McClarty G."/>
            <person name="Rank R.G."/>
            <person name="Bavoil P.M."/>
            <person name="Fraser C.M."/>
        </authorList>
    </citation>
    <scope>NUCLEOTIDE SEQUENCE [LARGE SCALE GENOMIC DNA]</scope>
    <source>
        <strain>ATCC VR-813 / DSM 19441 / 03DC25 / GPIC</strain>
    </source>
</reference>
<dbReference type="EMBL" id="AE015925">
    <property type="protein sequence ID" value="AAP04901.1"/>
    <property type="molecule type" value="Genomic_DNA"/>
</dbReference>
<dbReference type="RefSeq" id="WP_011006122.1">
    <property type="nucleotide sequence ID" value="NC_003361.3"/>
</dbReference>
<dbReference type="STRING" id="227941.CCA_00149"/>
<dbReference type="KEGG" id="cca:CCA_00149"/>
<dbReference type="eggNOG" id="COG0759">
    <property type="taxonomic scope" value="Bacteria"/>
</dbReference>
<dbReference type="HOGENOM" id="CLU_144811_2_1_0"/>
<dbReference type="OrthoDB" id="9801753at2"/>
<dbReference type="Proteomes" id="UP000002193">
    <property type="component" value="Chromosome"/>
</dbReference>
<dbReference type="GO" id="GO:0005886">
    <property type="term" value="C:plasma membrane"/>
    <property type="evidence" value="ECO:0007669"/>
    <property type="project" value="UniProtKB-SubCell"/>
</dbReference>
<dbReference type="HAMAP" id="MF_00386">
    <property type="entry name" value="UPF0161_YidD"/>
    <property type="match status" value="1"/>
</dbReference>
<dbReference type="InterPro" id="IPR002696">
    <property type="entry name" value="Membr_insert_effic_factor_YidD"/>
</dbReference>
<dbReference type="NCBIfam" id="TIGR00278">
    <property type="entry name" value="membrane protein insertion efficiency factor YidD"/>
    <property type="match status" value="1"/>
</dbReference>
<dbReference type="PANTHER" id="PTHR33383">
    <property type="entry name" value="MEMBRANE PROTEIN INSERTION EFFICIENCY FACTOR-RELATED"/>
    <property type="match status" value="1"/>
</dbReference>
<dbReference type="PANTHER" id="PTHR33383:SF1">
    <property type="entry name" value="MEMBRANE PROTEIN INSERTION EFFICIENCY FACTOR-RELATED"/>
    <property type="match status" value="1"/>
</dbReference>
<dbReference type="Pfam" id="PF01809">
    <property type="entry name" value="YidD"/>
    <property type="match status" value="1"/>
</dbReference>
<dbReference type="SMART" id="SM01234">
    <property type="entry name" value="Haemolytic"/>
    <property type="match status" value="1"/>
</dbReference>
<keyword id="KW-0997">Cell inner membrane</keyword>
<keyword id="KW-1003">Cell membrane</keyword>
<keyword id="KW-0472">Membrane</keyword>